<name>EAF_SCHPO</name>
<keyword id="KW-0010">Activator</keyword>
<keyword id="KW-0156">Chromatin regulator</keyword>
<keyword id="KW-0175">Coiled coil</keyword>
<keyword id="KW-0227">DNA damage</keyword>
<keyword id="KW-0234">DNA repair</keyword>
<keyword id="KW-0539">Nucleus</keyword>
<keyword id="KW-0597">Phosphoprotein</keyword>
<keyword id="KW-1185">Reference proteome</keyword>
<keyword id="KW-0804">Transcription</keyword>
<keyword id="KW-0805">Transcription regulation</keyword>
<proteinExistence type="evidence at protein level"/>
<evidence type="ECO:0000250" key="1"/>
<evidence type="ECO:0000255" key="2"/>
<evidence type="ECO:0000255" key="3">
    <source>
        <dbReference type="PROSITE-ProRule" id="PRU00133"/>
    </source>
</evidence>
<evidence type="ECO:0000255" key="4">
    <source>
        <dbReference type="PROSITE-ProRule" id="PRU00549"/>
    </source>
</evidence>
<evidence type="ECO:0000256" key="5">
    <source>
        <dbReference type="SAM" id="MobiDB-lite"/>
    </source>
</evidence>
<evidence type="ECO:0000269" key="6">
    <source>
    </source>
</evidence>
<evidence type="ECO:0000269" key="7">
    <source>
    </source>
</evidence>
<evidence type="ECO:0000269" key="8">
    <source>
    </source>
</evidence>
<evidence type="ECO:0000305" key="9"/>
<dbReference type="EMBL" id="CU329672">
    <property type="protein sequence ID" value="CAA18643.2"/>
    <property type="molecule type" value="Genomic_DNA"/>
</dbReference>
<dbReference type="PIR" id="T41135">
    <property type="entry name" value="T41135"/>
</dbReference>
<dbReference type="RefSeq" id="NP_588036.2">
    <property type="nucleotide sequence ID" value="NM_001023028.2"/>
</dbReference>
<dbReference type="BioGRID" id="275686">
    <property type="interactions" value="6"/>
</dbReference>
<dbReference type="FunCoup" id="O59773">
    <property type="interactions" value="12"/>
</dbReference>
<dbReference type="IntAct" id="O59773">
    <property type="interactions" value="1"/>
</dbReference>
<dbReference type="MINT" id="O59773"/>
<dbReference type="STRING" id="284812.O59773"/>
<dbReference type="iPTMnet" id="O59773"/>
<dbReference type="PaxDb" id="4896-SPCC1795.08c.1"/>
<dbReference type="EnsemblFungi" id="SPCC1795.08c.1">
    <property type="protein sequence ID" value="SPCC1795.08c.1:pep"/>
    <property type="gene ID" value="SPCC1795.08c"/>
</dbReference>
<dbReference type="GeneID" id="2539114"/>
<dbReference type="KEGG" id="spo:2539114"/>
<dbReference type="PomBase" id="SPCC1795.08c">
    <property type="gene designation" value="vid21"/>
</dbReference>
<dbReference type="VEuPathDB" id="FungiDB:SPCC1795.08c"/>
<dbReference type="eggNOG" id="ENOG502QSEY">
    <property type="taxonomic scope" value="Eukaryota"/>
</dbReference>
<dbReference type="HOGENOM" id="CLU_305264_0_0_1"/>
<dbReference type="InParanoid" id="O59773"/>
<dbReference type="OMA" id="DEMQWMS"/>
<dbReference type="PRO" id="PR:O59773"/>
<dbReference type="Proteomes" id="UP000002485">
    <property type="component" value="Chromosome III"/>
</dbReference>
<dbReference type="GO" id="GO:0035267">
    <property type="term" value="C:NuA4 histone acetyltransferase complex"/>
    <property type="evidence" value="ECO:0000314"/>
    <property type="project" value="PomBase"/>
</dbReference>
<dbReference type="GO" id="GO:0005634">
    <property type="term" value="C:nucleus"/>
    <property type="evidence" value="ECO:0007005"/>
    <property type="project" value="PomBase"/>
</dbReference>
<dbReference type="GO" id="GO:0003682">
    <property type="term" value="F:chromatin binding"/>
    <property type="evidence" value="ECO:0000318"/>
    <property type="project" value="GO_Central"/>
</dbReference>
<dbReference type="GO" id="GO:0003677">
    <property type="term" value="F:DNA binding"/>
    <property type="evidence" value="ECO:0000255"/>
    <property type="project" value="PomBase"/>
</dbReference>
<dbReference type="GO" id="GO:0006281">
    <property type="term" value="P:DNA repair"/>
    <property type="evidence" value="ECO:0000318"/>
    <property type="project" value="GO_Central"/>
</dbReference>
<dbReference type="GO" id="GO:0140861">
    <property type="term" value="P:DNA repair-dependent chromatin remodeling"/>
    <property type="evidence" value="ECO:0000305"/>
    <property type="project" value="PomBase"/>
</dbReference>
<dbReference type="Gene3D" id="1.10.10.60">
    <property type="entry name" value="Homeodomain-like"/>
    <property type="match status" value="1"/>
</dbReference>
<dbReference type="InterPro" id="IPR009057">
    <property type="entry name" value="Homeodomain-like_sf"/>
</dbReference>
<dbReference type="InterPro" id="IPR014012">
    <property type="entry name" value="HSA_dom"/>
</dbReference>
<dbReference type="InterPro" id="IPR001005">
    <property type="entry name" value="SANT/Myb"/>
</dbReference>
<dbReference type="PANTHER" id="PTHR46459:SF1">
    <property type="entry name" value="E1A-BINDING PROTEIN P400"/>
    <property type="match status" value="1"/>
</dbReference>
<dbReference type="PANTHER" id="PTHR46459">
    <property type="entry name" value="E1A-BINDING PROTEIN P400-RELATED"/>
    <property type="match status" value="1"/>
</dbReference>
<dbReference type="Pfam" id="PF07529">
    <property type="entry name" value="HSA"/>
    <property type="match status" value="1"/>
</dbReference>
<dbReference type="Pfam" id="PF13921">
    <property type="entry name" value="Myb_DNA-bind_6"/>
    <property type="match status" value="1"/>
</dbReference>
<dbReference type="SMART" id="SM00573">
    <property type="entry name" value="HSA"/>
    <property type="match status" value="1"/>
</dbReference>
<dbReference type="SMART" id="SM00717">
    <property type="entry name" value="SANT"/>
    <property type="match status" value="1"/>
</dbReference>
<dbReference type="SUPFAM" id="SSF46689">
    <property type="entry name" value="Homeodomain-like"/>
    <property type="match status" value="1"/>
</dbReference>
<dbReference type="PROSITE" id="PS51204">
    <property type="entry name" value="HSA"/>
    <property type="match status" value="1"/>
</dbReference>
<dbReference type="PROSITE" id="PS50090">
    <property type="entry name" value="MYB_LIKE"/>
    <property type="match status" value="1"/>
</dbReference>
<organism>
    <name type="scientific">Schizosaccharomyces pombe (strain 972 / ATCC 24843)</name>
    <name type="common">Fission yeast</name>
    <dbReference type="NCBI Taxonomy" id="284812"/>
    <lineage>
        <taxon>Eukaryota</taxon>
        <taxon>Fungi</taxon>
        <taxon>Dikarya</taxon>
        <taxon>Ascomycota</taxon>
        <taxon>Taphrinomycotina</taxon>
        <taxon>Schizosaccharomycetes</taxon>
        <taxon>Schizosaccharomycetales</taxon>
        <taxon>Schizosaccharomycetaceae</taxon>
        <taxon>Schizosaccharomyces</taxon>
    </lineage>
</organism>
<comment type="function">
    <text evidence="1">Component of the NuA4 histone acetyltransferase complex which is involved in transcriptional activation of selected genes principally by acetylation of nucleosomal histone H4 and H2A. The NuA4 complex is also involved in DNA repair (By similarity).</text>
</comment>
<comment type="subunit">
    <text evidence="8">Component of the NuA4 histone acetyltransferase complex.</text>
</comment>
<comment type="subcellular location">
    <subcellularLocation>
        <location evidence="4 6">Nucleus</location>
    </subcellularLocation>
</comment>
<comment type="similarity">
    <text evidence="9">Belongs to the EAF1 family.</text>
</comment>
<feature type="chain" id="PRO_0000065822" description="Chromatin modification-related protein vid21">
    <location>
        <begin position="1"/>
        <end position="994"/>
    </location>
</feature>
<feature type="domain" description="HSA" evidence="4">
    <location>
        <begin position="475"/>
        <end position="548"/>
    </location>
</feature>
<feature type="domain" description="Myb-like" evidence="3">
    <location>
        <begin position="713"/>
        <end position="773"/>
    </location>
</feature>
<feature type="region of interest" description="Disordered" evidence="5">
    <location>
        <begin position="122"/>
        <end position="275"/>
    </location>
</feature>
<feature type="region of interest" description="Disordered" evidence="5">
    <location>
        <begin position="288"/>
        <end position="308"/>
    </location>
</feature>
<feature type="region of interest" description="Disordered" evidence="5">
    <location>
        <begin position="671"/>
        <end position="693"/>
    </location>
</feature>
<feature type="region of interest" description="Disordered" evidence="5">
    <location>
        <begin position="857"/>
        <end position="880"/>
    </location>
</feature>
<feature type="region of interest" description="Disordered" evidence="5">
    <location>
        <begin position="975"/>
        <end position="994"/>
    </location>
</feature>
<feature type="coiled-coil region" evidence="2">
    <location>
        <begin position="880"/>
        <end position="912"/>
    </location>
</feature>
<feature type="compositionally biased region" description="Basic and acidic residues" evidence="5">
    <location>
        <begin position="158"/>
        <end position="171"/>
    </location>
</feature>
<feature type="compositionally biased region" description="Basic and acidic residues" evidence="5">
    <location>
        <begin position="178"/>
        <end position="191"/>
    </location>
</feature>
<feature type="compositionally biased region" description="Basic and acidic residues" evidence="5">
    <location>
        <begin position="204"/>
        <end position="233"/>
    </location>
</feature>
<feature type="compositionally biased region" description="Basic and acidic residues" evidence="5">
    <location>
        <begin position="254"/>
        <end position="265"/>
    </location>
</feature>
<feature type="compositionally biased region" description="Basic and acidic residues" evidence="5">
    <location>
        <begin position="288"/>
        <end position="305"/>
    </location>
</feature>
<feature type="compositionally biased region" description="Basic and acidic residues" evidence="5">
    <location>
        <begin position="672"/>
        <end position="693"/>
    </location>
</feature>
<feature type="modified residue" description="Phosphoserine" evidence="7">
    <location>
        <position position="298"/>
    </location>
</feature>
<feature type="modified residue" description="Phosphoserine" evidence="7">
    <location>
        <position position="378"/>
    </location>
</feature>
<reference key="1">
    <citation type="journal article" date="2002" name="Nature">
        <title>The genome sequence of Schizosaccharomyces pombe.</title>
        <authorList>
            <person name="Wood V."/>
            <person name="Gwilliam R."/>
            <person name="Rajandream M.A."/>
            <person name="Lyne M.H."/>
            <person name="Lyne R."/>
            <person name="Stewart A."/>
            <person name="Sgouros J.G."/>
            <person name="Peat N."/>
            <person name="Hayles J."/>
            <person name="Baker S.G."/>
            <person name="Basham D."/>
            <person name="Bowman S."/>
            <person name="Brooks K."/>
            <person name="Brown D."/>
            <person name="Brown S."/>
            <person name="Chillingworth T."/>
            <person name="Churcher C.M."/>
            <person name="Collins M."/>
            <person name="Connor R."/>
            <person name="Cronin A."/>
            <person name="Davis P."/>
            <person name="Feltwell T."/>
            <person name="Fraser A."/>
            <person name="Gentles S."/>
            <person name="Goble A."/>
            <person name="Hamlin N."/>
            <person name="Harris D.E."/>
            <person name="Hidalgo J."/>
            <person name="Hodgson G."/>
            <person name="Holroyd S."/>
            <person name="Hornsby T."/>
            <person name="Howarth S."/>
            <person name="Huckle E.J."/>
            <person name="Hunt S."/>
            <person name="Jagels K."/>
            <person name="James K.D."/>
            <person name="Jones L."/>
            <person name="Jones M."/>
            <person name="Leather S."/>
            <person name="McDonald S."/>
            <person name="McLean J."/>
            <person name="Mooney P."/>
            <person name="Moule S."/>
            <person name="Mungall K.L."/>
            <person name="Murphy L.D."/>
            <person name="Niblett D."/>
            <person name="Odell C."/>
            <person name="Oliver K."/>
            <person name="O'Neil S."/>
            <person name="Pearson D."/>
            <person name="Quail M.A."/>
            <person name="Rabbinowitsch E."/>
            <person name="Rutherford K.M."/>
            <person name="Rutter S."/>
            <person name="Saunders D."/>
            <person name="Seeger K."/>
            <person name="Sharp S."/>
            <person name="Skelton J."/>
            <person name="Simmonds M.N."/>
            <person name="Squares R."/>
            <person name="Squares S."/>
            <person name="Stevens K."/>
            <person name="Taylor K."/>
            <person name="Taylor R.G."/>
            <person name="Tivey A."/>
            <person name="Walsh S.V."/>
            <person name="Warren T."/>
            <person name="Whitehead S."/>
            <person name="Woodward J.R."/>
            <person name="Volckaert G."/>
            <person name="Aert R."/>
            <person name="Robben J."/>
            <person name="Grymonprez B."/>
            <person name="Weltjens I."/>
            <person name="Vanstreels E."/>
            <person name="Rieger M."/>
            <person name="Schaefer M."/>
            <person name="Mueller-Auer S."/>
            <person name="Gabel C."/>
            <person name="Fuchs M."/>
            <person name="Duesterhoeft A."/>
            <person name="Fritzc C."/>
            <person name="Holzer E."/>
            <person name="Moestl D."/>
            <person name="Hilbert H."/>
            <person name="Borzym K."/>
            <person name="Langer I."/>
            <person name="Beck A."/>
            <person name="Lehrach H."/>
            <person name="Reinhardt R."/>
            <person name="Pohl T.M."/>
            <person name="Eger P."/>
            <person name="Zimmermann W."/>
            <person name="Wedler H."/>
            <person name="Wambutt R."/>
            <person name="Purnelle B."/>
            <person name="Goffeau A."/>
            <person name="Cadieu E."/>
            <person name="Dreano S."/>
            <person name="Gloux S."/>
            <person name="Lelaure V."/>
            <person name="Mottier S."/>
            <person name="Galibert F."/>
            <person name="Aves S.J."/>
            <person name="Xiang Z."/>
            <person name="Hunt C."/>
            <person name="Moore K."/>
            <person name="Hurst S.M."/>
            <person name="Lucas M."/>
            <person name="Rochet M."/>
            <person name="Gaillardin C."/>
            <person name="Tallada V.A."/>
            <person name="Garzon A."/>
            <person name="Thode G."/>
            <person name="Daga R.R."/>
            <person name="Cruzado L."/>
            <person name="Jimenez J."/>
            <person name="Sanchez M."/>
            <person name="del Rey F."/>
            <person name="Benito J."/>
            <person name="Dominguez A."/>
            <person name="Revuelta J.L."/>
            <person name="Moreno S."/>
            <person name="Armstrong J."/>
            <person name="Forsburg S.L."/>
            <person name="Cerutti L."/>
            <person name="Lowe T."/>
            <person name="McCombie W.R."/>
            <person name="Paulsen I."/>
            <person name="Potashkin J."/>
            <person name="Shpakovski G.V."/>
            <person name="Ussery D."/>
            <person name="Barrell B.G."/>
            <person name="Nurse P."/>
        </authorList>
    </citation>
    <scope>NUCLEOTIDE SEQUENCE [LARGE SCALE GENOMIC DNA]</scope>
    <source>
        <strain>972 / ATCC 24843</strain>
    </source>
</reference>
<reference key="2">
    <citation type="journal article" date="2011" name="Science">
        <title>Comparative functional genomics of the fission yeasts.</title>
        <authorList>
            <person name="Rhind N."/>
            <person name="Chen Z."/>
            <person name="Yassour M."/>
            <person name="Thompson D.A."/>
            <person name="Haas B.J."/>
            <person name="Habib N."/>
            <person name="Wapinski I."/>
            <person name="Roy S."/>
            <person name="Lin M.F."/>
            <person name="Heiman D.I."/>
            <person name="Young S.K."/>
            <person name="Furuya K."/>
            <person name="Guo Y."/>
            <person name="Pidoux A."/>
            <person name="Chen H.M."/>
            <person name="Robbertse B."/>
            <person name="Goldberg J.M."/>
            <person name="Aoki K."/>
            <person name="Bayne E.H."/>
            <person name="Berlin A.M."/>
            <person name="Desjardins C.A."/>
            <person name="Dobbs E."/>
            <person name="Dukaj L."/>
            <person name="Fan L."/>
            <person name="FitzGerald M.G."/>
            <person name="French C."/>
            <person name="Gujja S."/>
            <person name="Hansen K."/>
            <person name="Keifenheim D."/>
            <person name="Levin J.Z."/>
            <person name="Mosher R.A."/>
            <person name="Mueller C.A."/>
            <person name="Pfiffner J."/>
            <person name="Priest M."/>
            <person name="Russ C."/>
            <person name="Smialowska A."/>
            <person name="Swoboda P."/>
            <person name="Sykes S.M."/>
            <person name="Vaughn M."/>
            <person name="Vengrova S."/>
            <person name="Yoder R."/>
            <person name="Zeng Q."/>
            <person name="Allshire R."/>
            <person name="Baulcombe D."/>
            <person name="Birren B.W."/>
            <person name="Brown W."/>
            <person name="Ekwall K."/>
            <person name="Kellis M."/>
            <person name="Leatherwood J."/>
            <person name="Levin H."/>
            <person name="Margalit H."/>
            <person name="Martienssen R."/>
            <person name="Nieduszynski C.A."/>
            <person name="Spatafora J.W."/>
            <person name="Friedman N."/>
            <person name="Dalgaard J.Z."/>
            <person name="Baumann P."/>
            <person name="Niki H."/>
            <person name="Regev A."/>
            <person name="Nusbaum C."/>
        </authorList>
    </citation>
    <scope>REVISION OF GENE MODEL</scope>
</reference>
<reference key="3">
    <citation type="journal article" date="2006" name="Nat. Biotechnol.">
        <title>ORFeome cloning and global analysis of protein localization in the fission yeast Schizosaccharomyces pombe.</title>
        <authorList>
            <person name="Matsuyama A."/>
            <person name="Arai R."/>
            <person name="Yashiroda Y."/>
            <person name="Shirai A."/>
            <person name="Kamata A."/>
            <person name="Sekido S."/>
            <person name="Kobayashi Y."/>
            <person name="Hashimoto A."/>
            <person name="Hamamoto M."/>
            <person name="Hiraoka Y."/>
            <person name="Horinouchi S."/>
            <person name="Yoshida M."/>
        </authorList>
    </citation>
    <scope>SUBCELLULAR LOCATION [LARGE SCALE ANALYSIS]</scope>
</reference>
<reference key="4">
    <citation type="journal article" date="2008" name="Genome Biol.">
        <title>Chromatin Central: towards the comparative proteome by accurate mapping of the yeast proteomic environment.</title>
        <authorList>
            <person name="Shevchenko A."/>
            <person name="Roguev A."/>
            <person name="Schaft D."/>
            <person name="Buchanan L."/>
            <person name="Habermann B."/>
            <person name="Sakalar C."/>
            <person name="Thomas H."/>
            <person name="Krogan N.J."/>
            <person name="Shevchenko A."/>
            <person name="Stewart A.F."/>
        </authorList>
    </citation>
    <scope>IDENTIFICATION IN NUA4 COMPLEX</scope>
    <scope>IDENTIFICATION BY MASS SPECTROMETRY</scope>
</reference>
<reference key="5">
    <citation type="journal article" date="2008" name="J. Proteome Res.">
        <title>Phosphoproteome analysis of fission yeast.</title>
        <authorList>
            <person name="Wilson-Grady J.T."/>
            <person name="Villen J."/>
            <person name="Gygi S.P."/>
        </authorList>
    </citation>
    <scope>PHOSPHORYLATION [LARGE SCALE ANALYSIS] AT SER-298 AND SER-378</scope>
    <scope>IDENTIFICATION BY MASS SPECTROMETRY</scope>
</reference>
<sequence length="994" mass="113498">MKQKETKTSQIALVDGEKLSITDSFASLFTLDEEEENDSVDNEEIKLTKEKHEKLLLLFWLHCKFPNGLEWLHSSSDLLPEQVSEWFNFYQKYRFKRGRNFNLSARESVTPIVEEPIVPEEPDNLEGVSEETPLKETSLELSEEEIITSKSPIPSPETIHKNIDVEEKETIEPTTPVKEVETTAHAEEEKGPLTPDSEYAARQLTEELANKSSQEEGVDKQLRVVEATEKEHEEDGNEENVTVTKPVEVATDQVESKEVKKKEVSETTEPTAPPVTVAEVLEIEDKVPKVDEVEEVHSPEAKVTENDVENVQSGIDIEKTIQLLNNQEIPSEQQIISVDKATESPVQEVAVDVNEKPVDEIVEPSKLQMENKLPSEKSPTIDRTGVEAPLFELSVSMPLTLIPPSKFSEPVKPELSSEAWLLRTEMSPLHLRLKNAHKYVLSDNWSHAYREEIVRQSLHHLTVAKEKGIWSFRQPKRQNEMPRLKTHRDYVLDEMQWMSIDFSQERKWKIILAHRMANWVMDYHQASDKCTVCTPASLSKNKKPYMQENEHQKDSHEETFNEQIVSHFNLNDNNNNKVLSIPRDSLQFYNAVFSDDIFVTTNSEQIQNCVLNVPMYGPPTENNEYCEEISEKYPITPVSRFAYAKTKLKSTCAKASRKRLFNQLELSPPESFMEKKARSDENQLDGNKIKDDNQKLSSVGTFSVRPPYPPSSKDIRPEAPWLPEEDELLLLLLRRYSFNWEFVASRLTPPGLYIPLAEKRTAWDCFERWIQVDPRAANVQLTGSHARLAQQKLDESLRHSDKVSQHLSLRDEGTPNHLIKHNSYFLLPTVSRHYRPITIFEAIRKILKKREFAKKPTMTKRAIAPSAASTEKLPPVPSPLELSRLKSEREAQIQQIQAQRNFAQLQSQNRALRPQNAAVAAGAQQHNQQLAAFQAVAASQNSSNNSSAGVSPIAGRMVPRLQPYAVSSSLKLTPEQIHQLQQRKQTVPTTERTQ</sequence>
<protein>
    <recommendedName>
        <fullName>Chromatin modification-related protein vid21</fullName>
    </recommendedName>
    <alternativeName>
        <fullName>Esa1-associated factor vid21</fullName>
    </alternativeName>
    <alternativeName>
        <fullName>Vacuolar import and degradation protein 21</fullName>
    </alternativeName>
</protein>
<accession>O59773</accession>
<gene>
    <name type="primary">vid21</name>
    <name type="ORF">SPCC1795.08c</name>
</gene>